<proteinExistence type="inferred from homology"/>
<keyword id="KW-0012">Acyltransferase</keyword>
<keyword id="KW-0133">Cell shape</keyword>
<keyword id="KW-0961">Cell wall biogenesis/degradation</keyword>
<keyword id="KW-0963">Cytoplasm</keyword>
<keyword id="KW-0573">Peptidoglycan synthesis</keyword>
<keyword id="KW-0808">Transferase</keyword>
<name>FEMX_STAES</name>
<comment type="function">
    <text evidence="1">Catalyzes the incorporation of amino acid(s) into the interchain peptide bridge of peptidoglycan, using aminoacyl-tRNA as amino acid donor.</text>
</comment>
<comment type="catalytic activity">
    <reaction>
        <text>beta-D-GlcNAc-(1-&gt;4)-Mur2Ac(oyl-L-Ala-D-isoglutaminyl-L-Lys-D-Ala-D-Ala)-di-trans,octa-cis-undecaprenyl diphosphate + glycyl-tRNA(Gly) = beta-D-GlcNAc-(1-&gt;4)-Mur2Ac(oyl-L-Ala-D-isoglutaminyl-L-Lys-(N(6)-Gly)-D-Ala-D-Ala)-di-trans,octa-cis-undecaprenyl diphosphate + tRNA(Gly) + H(+)</text>
        <dbReference type="Rhea" id="RHEA:30435"/>
        <dbReference type="Rhea" id="RHEA-COMP:9664"/>
        <dbReference type="Rhea" id="RHEA-COMP:9683"/>
        <dbReference type="ChEBI" id="CHEBI:15378"/>
        <dbReference type="ChEBI" id="CHEBI:62233"/>
        <dbReference type="ChEBI" id="CHEBI:62234"/>
        <dbReference type="ChEBI" id="CHEBI:78442"/>
        <dbReference type="ChEBI" id="CHEBI:78522"/>
        <dbReference type="EC" id="2.3.2.16"/>
    </reaction>
</comment>
<comment type="subcellular location">
    <subcellularLocation>
        <location evidence="2">Cytoplasm</location>
    </subcellularLocation>
</comment>
<comment type="similarity">
    <text evidence="2">Belongs to the FemABX family.</text>
</comment>
<accession>Q8CNE9</accession>
<feature type="chain" id="PRO_0000236177" description="Lipid II:glycine glycyltransferase">
    <location>
        <begin position="1"/>
        <end position="416"/>
    </location>
</feature>
<sequence>MEKMNITNQQHDAFVKSHPNGDLLQLSKWADTKKLTGWYSRRIAVGENGQIKGVGQLLFKKIPKLPYTLCYVSRGFVADYNNKEVLEALLSYAKEVAKDEKSYAIKIDPDVEVDKGAEALKNLRELGFKHKGFKEGLSKDYIQPRMTMITPIDKTDDELVQSFERRNRSKVRLALKRGTKVERSNREGLKIFANLMKITGERDGFLTRDISYFENIYDALHEDGDAELFLVKLEPKPVLDTVNQDLEAQLAEKEKLQSKKQDKKTLNKLNDIDNKIKKTNELKSDLTELEKSEPEGIYLSGALLMFAGNKSYYLYGASSNDYRDFLPNHHMQFEMMKYAREHGATTYDFGGTDNDPDKDSEHYGLWAFKRVWGTYLSEKIGEFDYVLNQPLYHLVEKVKPRLTKAKIKISRKLKGK</sequence>
<protein>
    <recommendedName>
        <fullName>Lipid II:glycine glycyltransferase</fullName>
        <ecNumber>2.3.2.16</ecNumber>
    </recommendedName>
    <alternativeName>
        <fullName>Factor essential for expression of methicillin resistance X</fullName>
    </alternativeName>
</protein>
<gene>
    <name type="primary">femX</name>
    <name type="synonym">fmhB</name>
    <name type="ordered locus">SE_1835</name>
</gene>
<evidence type="ECO:0000250" key="1"/>
<evidence type="ECO:0000305" key="2"/>
<reference key="1">
    <citation type="journal article" date="2003" name="Mol. Microbiol.">
        <title>Genome-based analysis of virulence genes in a non-biofilm-forming Staphylococcus epidermidis strain (ATCC 12228).</title>
        <authorList>
            <person name="Zhang Y.-Q."/>
            <person name="Ren S.-X."/>
            <person name="Li H.-L."/>
            <person name="Wang Y.-X."/>
            <person name="Fu G."/>
            <person name="Yang J."/>
            <person name="Qin Z.-Q."/>
            <person name="Miao Y.-G."/>
            <person name="Wang W.-Y."/>
            <person name="Chen R.-S."/>
            <person name="Shen Y."/>
            <person name="Chen Z."/>
            <person name="Yuan Z.-H."/>
            <person name="Zhao G.-P."/>
            <person name="Qu D."/>
            <person name="Danchin A."/>
            <person name="Wen Y.-M."/>
        </authorList>
    </citation>
    <scope>NUCLEOTIDE SEQUENCE [LARGE SCALE GENOMIC DNA]</scope>
    <source>
        <strain>ATCC 12228 / FDA PCI 1200</strain>
    </source>
</reference>
<organism>
    <name type="scientific">Staphylococcus epidermidis (strain ATCC 12228 / FDA PCI 1200)</name>
    <dbReference type="NCBI Taxonomy" id="176280"/>
    <lineage>
        <taxon>Bacteria</taxon>
        <taxon>Bacillati</taxon>
        <taxon>Bacillota</taxon>
        <taxon>Bacilli</taxon>
        <taxon>Bacillales</taxon>
        <taxon>Staphylococcaceae</taxon>
        <taxon>Staphylococcus</taxon>
    </lineage>
</organism>
<dbReference type="EC" id="2.3.2.16"/>
<dbReference type="EMBL" id="AE015929">
    <property type="protein sequence ID" value="AAO05476.1"/>
    <property type="molecule type" value="Genomic_DNA"/>
</dbReference>
<dbReference type="RefSeq" id="NP_765390.1">
    <property type="nucleotide sequence ID" value="NC_004461.1"/>
</dbReference>
<dbReference type="RefSeq" id="WP_002438530.1">
    <property type="nucleotide sequence ID" value="NZ_WBME01000007.1"/>
</dbReference>
<dbReference type="SMR" id="Q8CNE9"/>
<dbReference type="KEGG" id="sep:SE_1835"/>
<dbReference type="PATRIC" id="fig|176280.10.peg.1791"/>
<dbReference type="eggNOG" id="COG2348">
    <property type="taxonomic scope" value="Bacteria"/>
</dbReference>
<dbReference type="HOGENOM" id="CLU_048411_0_1_9"/>
<dbReference type="OrthoDB" id="9785911at2"/>
<dbReference type="Proteomes" id="UP000001411">
    <property type="component" value="Chromosome"/>
</dbReference>
<dbReference type="GO" id="GO:0005737">
    <property type="term" value="C:cytoplasm"/>
    <property type="evidence" value="ECO:0007669"/>
    <property type="project" value="UniProtKB-SubCell"/>
</dbReference>
<dbReference type="GO" id="GO:0016755">
    <property type="term" value="F:aminoacyltransferase activity"/>
    <property type="evidence" value="ECO:0007669"/>
    <property type="project" value="InterPro"/>
</dbReference>
<dbReference type="GO" id="GO:0071555">
    <property type="term" value="P:cell wall organization"/>
    <property type="evidence" value="ECO:0007669"/>
    <property type="project" value="UniProtKB-KW"/>
</dbReference>
<dbReference type="GO" id="GO:0009252">
    <property type="term" value="P:peptidoglycan biosynthetic process"/>
    <property type="evidence" value="ECO:0007669"/>
    <property type="project" value="UniProtKB-KW"/>
</dbReference>
<dbReference type="GO" id="GO:0008360">
    <property type="term" value="P:regulation of cell shape"/>
    <property type="evidence" value="ECO:0007669"/>
    <property type="project" value="UniProtKB-KW"/>
</dbReference>
<dbReference type="Gene3D" id="1.20.58.90">
    <property type="match status" value="1"/>
</dbReference>
<dbReference type="Gene3D" id="3.40.630.30">
    <property type="match status" value="2"/>
</dbReference>
<dbReference type="InterPro" id="IPR016181">
    <property type="entry name" value="Acyl_CoA_acyltransferase"/>
</dbReference>
<dbReference type="InterPro" id="IPR003447">
    <property type="entry name" value="FEMABX"/>
</dbReference>
<dbReference type="InterPro" id="IPR050644">
    <property type="entry name" value="PG_Glycine_Bridge_Synth"/>
</dbReference>
<dbReference type="PANTHER" id="PTHR36174">
    <property type="entry name" value="LIPID II:GLYCINE GLYCYLTRANSFERASE"/>
    <property type="match status" value="1"/>
</dbReference>
<dbReference type="PANTHER" id="PTHR36174:SF1">
    <property type="entry name" value="LIPID II:GLYCINE GLYCYLTRANSFERASE"/>
    <property type="match status" value="1"/>
</dbReference>
<dbReference type="Pfam" id="PF02388">
    <property type="entry name" value="FemAB"/>
    <property type="match status" value="1"/>
</dbReference>
<dbReference type="SUPFAM" id="SSF55729">
    <property type="entry name" value="Acyl-CoA N-acyltransferases (Nat)"/>
    <property type="match status" value="2"/>
</dbReference>
<dbReference type="PROSITE" id="PS51191">
    <property type="entry name" value="FEMABX"/>
    <property type="match status" value="1"/>
</dbReference>